<protein>
    <recommendedName>
        <fullName evidence="1">Ribosomal protein uS12 methylthiotransferase RimO</fullName>
        <shortName evidence="1">uS12 MTTase</shortName>
        <shortName evidence="1">uS12 methylthiotransferase</shortName>
        <ecNumber evidence="1">2.8.4.4</ecNumber>
    </recommendedName>
    <alternativeName>
        <fullName evidence="1">Ribosomal protein uS12 (aspartate-C(3))-methylthiotransferase</fullName>
    </alternativeName>
    <alternativeName>
        <fullName evidence="1">Ribosome maturation factor RimO</fullName>
    </alternativeName>
</protein>
<name>RIMO_DECAR</name>
<sequence>MTIQQKVPTVGFVSLGCPKASSDAERILTKLRAEGYEISPSYDNSDLVIVNTCGFIDAAVEESLDAIGEALNENGKVIVTGCLGAKGDIVQTTHPAVLAVTGPHAADEVMGIVHTHLPKPHDPYSDLVPPQGVRLTPDHFAYLKISEGCNHSCTFCIIPSLRGPLVSRPVGDVLAEAENLARAGVKEILVISQDTSAYGVDLKYRTAFWGGKPVKSRLKELCEALASLGIWVRLHYVYPYPSVDDVIPLMAEGKILPYLDVPFQHASPKILKAMKRPASAENTLERIAKWREICPEIVIRSTFITGFPGETEEDFDQLIQFLEDAKLDRVGAFAYSPVDGAKANELGELLPEDVREDRRRWLMQVQEDISADKLAAKIDTVIQVLVDEVDEEGTIARSKADAPEIDGLVYLDGHFDAQPGDFLQVKVIDADHHDLYAQVV</sequence>
<proteinExistence type="inferred from homology"/>
<gene>
    <name evidence="1" type="primary">rimO</name>
    <name type="ordered locus">Daro_2751</name>
</gene>
<accession>Q47CF0</accession>
<dbReference type="EC" id="2.8.4.4" evidence="1"/>
<dbReference type="EMBL" id="CP000089">
    <property type="protein sequence ID" value="AAZ47481.1"/>
    <property type="molecule type" value="Genomic_DNA"/>
</dbReference>
<dbReference type="SMR" id="Q47CF0"/>
<dbReference type="STRING" id="159087.Daro_2751"/>
<dbReference type="KEGG" id="dar:Daro_2751"/>
<dbReference type="eggNOG" id="COG0621">
    <property type="taxonomic scope" value="Bacteria"/>
</dbReference>
<dbReference type="HOGENOM" id="CLU_018697_0_0_4"/>
<dbReference type="OrthoDB" id="9805215at2"/>
<dbReference type="GO" id="GO:0005829">
    <property type="term" value="C:cytosol"/>
    <property type="evidence" value="ECO:0007669"/>
    <property type="project" value="TreeGrafter"/>
</dbReference>
<dbReference type="GO" id="GO:0051539">
    <property type="term" value="F:4 iron, 4 sulfur cluster binding"/>
    <property type="evidence" value="ECO:0007669"/>
    <property type="project" value="UniProtKB-UniRule"/>
</dbReference>
<dbReference type="GO" id="GO:0035599">
    <property type="term" value="F:aspartic acid methylthiotransferase activity"/>
    <property type="evidence" value="ECO:0007669"/>
    <property type="project" value="TreeGrafter"/>
</dbReference>
<dbReference type="GO" id="GO:0046872">
    <property type="term" value="F:metal ion binding"/>
    <property type="evidence" value="ECO:0007669"/>
    <property type="project" value="UniProtKB-KW"/>
</dbReference>
<dbReference type="GO" id="GO:0103039">
    <property type="term" value="F:protein methylthiotransferase activity"/>
    <property type="evidence" value="ECO:0007669"/>
    <property type="project" value="UniProtKB-EC"/>
</dbReference>
<dbReference type="GO" id="GO:0006400">
    <property type="term" value="P:tRNA modification"/>
    <property type="evidence" value="ECO:0007669"/>
    <property type="project" value="InterPro"/>
</dbReference>
<dbReference type="CDD" id="cd01335">
    <property type="entry name" value="Radical_SAM"/>
    <property type="match status" value="1"/>
</dbReference>
<dbReference type="FunFam" id="3.40.50.12160:FF:000002">
    <property type="entry name" value="Ribosomal protein S12 methylthiotransferase RimO"/>
    <property type="match status" value="1"/>
</dbReference>
<dbReference type="FunFam" id="3.80.30.20:FF:000001">
    <property type="entry name" value="tRNA-2-methylthio-N(6)-dimethylallyladenosine synthase 2"/>
    <property type="match status" value="1"/>
</dbReference>
<dbReference type="Gene3D" id="3.40.50.12160">
    <property type="entry name" value="Methylthiotransferase, N-terminal domain"/>
    <property type="match status" value="1"/>
</dbReference>
<dbReference type="Gene3D" id="2.40.50.140">
    <property type="entry name" value="Nucleic acid-binding proteins"/>
    <property type="match status" value="1"/>
</dbReference>
<dbReference type="Gene3D" id="3.80.30.20">
    <property type="entry name" value="tm_1862 like domain"/>
    <property type="match status" value="1"/>
</dbReference>
<dbReference type="HAMAP" id="MF_01865">
    <property type="entry name" value="MTTase_RimO"/>
    <property type="match status" value="1"/>
</dbReference>
<dbReference type="InterPro" id="IPR006638">
    <property type="entry name" value="Elp3/MiaA/NifB-like_rSAM"/>
</dbReference>
<dbReference type="InterPro" id="IPR005839">
    <property type="entry name" value="Methylthiotransferase"/>
</dbReference>
<dbReference type="InterPro" id="IPR020612">
    <property type="entry name" value="Methylthiotransferase_CS"/>
</dbReference>
<dbReference type="InterPro" id="IPR013848">
    <property type="entry name" value="Methylthiotransferase_N"/>
</dbReference>
<dbReference type="InterPro" id="IPR038135">
    <property type="entry name" value="Methylthiotransferase_N_sf"/>
</dbReference>
<dbReference type="InterPro" id="IPR012340">
    <property type="entry name" value="NA-bd_OB-fold"/>
</dbReference>
<dbReference type="InterPro" id="IPR005840">
    <property type="entry name" value="Ribosomal_uS12_MeSTrfase_RimO"/>
</dbReference>
<dbReference type="InterPro" id="IPR007197">
    <property type="entry name" value="rSAM"/>
</dbReference>
<dbReference type="InterPro" id="IPR023404">
    <property type="entry name" value="rSAM_horseshoe"/>
</dbReference>
<dbReference type="InterPro" id="IPR002792">
    <property type="entry name" value="TRAM_dom"/>
</dbReference>
<dbReference type="NCBIfam" id="TIGR01125">
    <property type="entry name" value="30S ribosomal protein S12 methylthiotransferase RimO"/>
    <property type="match status" value="1"/>
</dbReference>
<dbReference type="NCBIfam" id="TIGR00089">
    <property type="entry name" value="MiaB/RimO family radical SAM methylthiotransferase"/>
    <property type="match status" value="1"/>
</dbReference>
<dbReference type="PANTHER" id="PTHR43837">
    <property type="entry name" value="RIBOSOMAL PROTEIN S12 METHYLTHIOTRANSFERASE RIMO"/>
    <property type="match status" value="1"/>
</dbReference>
<dbReference type="PANTHER" id="PTHR43837:SF1">
    <property type="entry name" value="RIBOSOMAL PROTEIN US12 METHYLTHIOTRANSFERASE RIMO"/>
    <property type="match status" value="1"/>
</dbReference>
<dbReference type="Pfam" id="PF04055">
    <property type="entry name" value="Radical_SAM"/>
    <property type="match status" value="1"/>
</dbReference>
<dbReference type="Pfam" id="PF18693">
    <property type="entry name" value="TRAM_2"/>
    <property type="match status" value="1"/>
</dbReference>
<dbReference type="Pfam" id="PF00919">
    <property type="entry name" value="UPF0004"/>
    <property type="match status" value="1"/>
</dbReference>
<dbReference type="SFLD" id="SFLDG01082">
    <property type="entry name" value="B12-binding_domain_containing"/>
    <property type="match status" value="1"/>
</dbReference>
<dbReference type="SFLD" id="SFLDS00029">
    <property type="entry name" value="Radical_SAM"/>
    <property type="match status" value="1"/>
</dbReference>
<dbReference type="SFLD" id="SFLDF00274">
    <property type="entry name" value="ribosomal_protein_S12_methylth"/>
    <property type="match status" value="1"/>
</dbReference>
<dbReference type="SMART" id="SM00729">
    <property type="entry name" value="Elp3"/>
    <property type="match status" value="1"/>
</dbReference>
<dbReference type="SUPFAM" id="SSF102114">
    <property type="entry name" value="Radical SAM enzymes"/>
    <property type="match status" value="1"/>
</dbReference>
<dbReference type="PROSITE" id="PS51449">
    <property type="entry name" value="MTTASE_N"/>
    <property type="match status" value="1"/>
</dbReference>
<dbReference type="PROSITE" id="PS01278">
    <property type="entry name" value="MTTASE_RADICAL"/>
    <property type="match status" value="1"/>
</dbReference>
<dbReference type="PROSITE" id="PS51918">
    <property type="entry name" value="RADICAL_SAM"/>
    <property type="match status" value="1"/>
</dbReference>
<dbReference type="PROSITE" id="PS50926">
    <property type="entry name" value="TRAM"/>
    <property type="match status" value="1"/>
</dbReference>
<reference key="1">
    <citation type="journal article" date="2009" name="BMC Genomics">
        <title>Metabolic analysis of the soil microbe Dechloromonas aromatica str. RCB: indications of a surprisingly complex life-style and cryptic anaerobic pathways for aromatic degradation.</title>
        <authorList>
            <person name="Salinero K.K."/>
            <person name="Keller K."/>
            <person name="Feil W.S."/>
            <person name="Feil H."/>
            <person name="Trong S."/>
            <person name="Di Bartolo G."/>
            <person name="Lapidus A."/>
        </authorList>
    </citation>
    <scope>NUCLEOTIDE SEQUENCE [LARGE SCALE GENOMIC DNA]</scope>
    <source>
        <strain>RCB</strain>
    </source>
</reference>
<organism>
    <name type="scientific">Dechloromonas aromatica (strain RCB)</name>
    <dbReference type="NCBI Taxonomy" id="159087"/>
    <lineage>
        <taxon>Bacteria</taxon>
        <taxon>Pseudomonadati</taxon>
        <taxon>Pseudomonadota</taxon>
        <taxon>Betaproteobacteria</taxon>
        <taxon>Rhodocyclales</taxon>
        <taxon>Azonexaceae</taxon>
        <taxon>Dechloromonas</taxon>
    </lineage>
</organism>
<keyword id="KW-0004">4Fe-4S</keyword>
<keyword id="KW-0963">Cytoplasm</keyword>
<keyword id="KW-0408">Iron</keyword>
<keyword id="KW-0411">Iron-sulfur</keyword>
<keyword id="KW-0479">Metal-binding</keyword>
<keyword id="KW-0949">S-adenosyl-L-methionine</keyword>
<keyword id="KW-0808">Transferase</keyword>
<comment type="function">
    <text evidence="1">Catalyzes the methylthiolation of an aspartic acid residue of ribosomal protein uS12.</text>
</comment>
<comment type="catalytic activity">
    <reaction evidence="1">
        <text>L-aspartate(89)-[ribosomal protein uS12]-hydrogen + (sulfur carrier)-SH + AH2 + 2 S-adenosyl-L-methionine = 3-methylsulfanyl-L-aspartate(89)-[ribosomal protein uS12]-hydrogen + (sulfur carrier)-H + 5'-deoxyadenosine + L-methionine + A + S-adenosyl-L-homocysteine + 2 H(+)</text>
        <dbReference type="Rhea" id="RHEA:37087"/>
        <dbReference type="Rhea" id="RHEA-COMP:10460"/>
        <dbReference type="Rhea" id="RHEA-COMP:10461"/>
        <dbReference type="Rhea" id="RHEA-COMP:14737"/>
        <dbReference type="Rhea" id="RHEA-COMP:14739"/>
        <dbReference type="ChEBI" id="CHEBI:13193"/>
        <dbReference type="ChEBI" id="CHEBI:15378"/>
        <dbReference type="ChEBI" id="CHEBI:17319"/>
        <dbReference type="ChEBI" id="CHEBI:17499"/>
        <dbReference type="ChEBI" id="CHEBI:29917"/>
        <dbReference type="ChEBI" id="CHEBI:29961"/>
        <dbReference type="ChEBI" id="CHEBI:57844"/>
        <dbReference type="ChEBI" id="CHEBI:57856"/>
        <dbReference type="ChEBI" id="CHEBI:59789"/>
        <dbReference type="ChEBI" id="CHEBI:64428"/>
        <dbReference type="ChEBI" id="CHEBI:73599"/>
        <dbReference type="EC" id="2.8.4.4"/>
    </reaction>
</comment>
<comment type="cofactor">
    <cofactor evidence="1">
        <name>[4Fe-4S] cluster</name>
        <dbReference type="ChEBI" id="CHEBI:49883"/>
    </cofactor>
    <text evidence="1">Binds 2 [4Fe-4S] clusters. One cluster is coordinated with 3 cysteines and an exchangeable S-adenosyl-L-methionine.</text>
</comment>
<comment type="subcellular location">
    <subcellularLocation>
        <location evidence="1">Cytoplasm</location>
    </subcellularLocation>
</comment>
<comment type="similarity">
    <text evidence="1">Belongs to the methylthiotransferase family. RimO subfamily.</text>
</comment>
<evidence type="ECO:0000255" key="1">
    <source>
        <dbReference type="HAMAP-Rule" id="MF_01865"/>
    </source>
</evidence>
<evidence type="ECO:0000255" key="2">
    <source>
        <dbReference type="PROSITE-ProRule" id="PRU01266"/>
    </source>
</evidence>
<feature type="chain" id="PRO_0000374798" description="Ribosomal protein uS12 methylthiotransferase RimO">
    <location>
        <begin position="1"/>
        <end position="440"/>
    </location>
</feature>
<feature type="domain" description="MTTase N-terminal" evidence="1">
    <location>
        <begin position="8"/>
        <end position="118"/>
    </location>
</feature>
<feature type="domain" description="Radical SAM core" evidence="2">
    <location>
        <begin position="135"/>
        <end position="372"/>
    </location>
</feature>
<feature type="domain" description="TRAM" evidence="1">
    <location>
        <begin position="375"/>
        <end position="440"/>
    </location>
</feature>
<feature type="binding site" evidence="1">
    <location>
        <position position="17"/>
    </location>
    <ligand>
        <name>[4Fe-4S] cluster</name>
        <dbReference type="ChEBI" id="CHEBI:49883"/>
        <label>1</label>
    </ligand>
</feature>
<feature type="binding site" evidence="1">
    <location>
        <position position="53"/>
    </location>
    <ligand>
        <name>[4Fe-4S] cluster</name>
        <dbReference type="ChEBI" id="CHEBI:49883"/>
        <label>1</label>
    </ligand>
</feature>
<feature type="binding site" evidence="1">
    <location>
        <position position="82"/>
    </location>
    <ligand>
        <name>[4Fe-4S] cluster</name>
        <dbReference type="ChEBI" id="CHEBI:49883"/>
        <label>1</label>
    </ligand>
</feature>
<feature type="binding site" evidence="1">
    <location>
        <position position="149"/>
    </location>
    <ligand>
        <name>[4Fe-4S] cluster</name>
        <dbReference type="ChEBI" id="CHEBI:49883"/>
        <label>2</label>
        <note>4Fe-4S-S-AdoMet</note>
    </ligand>
</feature>
<feature type="binding site" evidence="1">
    <location>
        <position position="153"/>
    </location>
    <ligand>
        <name>[4Fe-4S] cluster</name>
        <dbReference type="ChEBI" id="CHEBI:49883"/>
        <label>2</label>
        <note>4Fe-4S-S-AdoMet</note>
    </ligand>
</feature>
<feature type="binding site" evidence="1">
    <location>
        <position position="156"/>
    </location>
    <ligand>
        <name>[4Fe-4S] cluster</name>
        <dbReference type="ChEBI" id="CHEBI:49883"/>
        <label>2</label>
        <note>4Fe-4S-S-AdoMet</note>
    </ligand>
</feature>